<sequence>MAALSELLGDLVADVDGLFLFTPSSSHYEQFAETDVPTVVIAPENTVEAETFVELPLQFQNVKDRIRFGVEGAMEQSIVEAGDTIACNVGTFGGDPDSLVRVRVEENMRSGIYDLFANSRADPGVIRDVFEVAIELGKKGQKGEPVGALFIVGDAGKVMNKSRPLSYNPFEKSHVYVGDPIVNVMLKEFSRLDGAFVISDSGKIVSAYRYLEPSAEGVDIPKGLGARHMAGGAITRDTNATAIVLSESDGLVRAFKGGKMILEIDPEAY</sequence>
<keyword id="KW-0067">ATP-binding</keyword>
<keyword id="KW-0464">Manganese</keyword>
<keyword id="KW-0547">Nucleotide-binding</keyword>
<keyword id="KW-0548">Nucleotidyltransferase</keyword>
<keyword id="KW-1185">Reference proteome</keyword>
<keyword id="KW-0808">Transferase</keyword>
<gene>
    <name evidence="1 3" type="primary">dacZ</name>
    <name evidence="4" type="ordered locus">HVO_1660</name>
</gene>
<feature type="chain" id="PRO_0000447476" description="Diadenylate cyclase">
    <location>
        <begin position="1"/>
        <end position="269"/>
    </location>
</feature>
<feature type="domain" description="DAC" evidence="1">
    <location>
        <begin position="109"/>
        <end position="266"/>
    </location>
</feature>
<accession>D4GZM5</accession>
<accession>L9VF24</accession>
<dbReference type="EC" id="2.7.7.85" evidence="1 2"/>
<dbReference type="EMBL" id="CP001956">
    <property type="protein sequence ID" value="ADE04317.1"/>
    <property type="molecule type" value="Genomic_DNA"/>
</dbReference>
<dbReference type="RefSeq" id="WP_004041551.1">
    <property type="nucleotide sequence ID" value="NC_013967.1"/>
</dbReference>
<dbReference type="SMR" id="D4GZM5"/>
<dbReference type="STRING" id="309800.HVO_1660"/>
<dbReference type="PaxDb" id="309800-C498_03660"/>
<dbReference type="EnsemblBacteria" id="ADE04317">
    <property type="protein sequence ID" value="ADE04317"/>
    <property type="gene ID" value="HVO_1660"/>
</dbReference>
<dbReference type="GeneID" id="8925157"/>
<dbReference type="KEGG" id="hvo:HVO_1660"/>
<dbReference type="PATRIC" id="fig|309800.29.peg.712"/>
<dbReference type="eggNOG" id="arCOG04453">
    <property type="taxonomic scope" value="Archaea"/>
</dbReference>
<dbReference type="HOGENOM" id="CLU_063222_0_0_2"/>
<dbReference type="OrthoDB" id="85944at2157"/>
<dbReference type="BRENDA" id="2.7.7.85">
    <property type="organism ID" value="2561"/>
</dbReference>
<dbReference type="Proteomes" id="UP000008243">
    <property type="component" value="Chromosome"/>
</dbReference>
<dbReference type="GO" id="GO:0004016">
    <property type="term" value="F:adenylate cyclase activity"/>
    <property type="evidence" value="ECO:0007669"/>
    <property type="project" value="UniProtKB-UniRule"/>
</dbReference>
<dbReference type="GO" id="GO:0005524">
    <property type="term" value="F:ATP binding"/>
    <property type="evidence" value="ECO:0007669"/>
    <property type="project" value="UniProtKB-UniRule"/>
</dbReference>
<dbReference type="GO" id="GO:0106408">
    <property type="term" value="F:diadenylate cyclase activity"/>
    <property type="evidence" value="ECO:0007669"/>
    <property type="project" value="UniProtKB-EC"/>
</dbReference>
<dbReference type="GO" id="GO:0030145">
    <property type="term" value="F:manganese ion binding"/>
    <property type="evidence" value="ECO:0007669"/>
    <property type="project" value="UniProtKB-UniRule"/>
</dbReference>
<dbReference type="Gene3D" id="3.40.1700.10">
    <property type="entry name" value="DNA integrity scanning protein, DisA, N-terminal domain"/>
    <property type="match status" value="1"/>
</dbReference>
<dbReference type="HAMAP" id="MF_00840">
    <property type="entry name" value="DacZ"/>
    <property type="match status" value="1"/>
</dbReference>
<dbReference type="InterPro" id="IPR014499">
    <property type="entry name" value="DAC_DacZ"/>
</dbReference>
<dbReference type="InterPro" id="IPR045586">
    <property type="entry name" value="DacZ_N"/>
</dbReference>
<dbReference type="InterPro" id="IPR053542">
    <property type="entry name" value="Diadenylate_Cyclase_DacZ"/>
</dbReference>
<dbReference type="InterPro" id="IPR050338">
    <property type="entry name" value="DisA"/>
</dbReference>
<dbReference type="InterPro" id="IPR036888">
    <property type="entry name" value="DNA_integrity_DisA_N_sf"/>
</dbReference>
<dbReference type="InterPro" id="IPR003390">
    <property type="entry name" value="DNA_integrity_scan_DisA_N"/>
</dbReference>
<dbReference type="NCBIfam" id="NF041371">
    <property type="entry name" value="Diadnylcyc_Halo"/>
    <property type="match status" value="1"/>
</dbReference>
<dbReference type="PANTHER" id="PTHR34185">
    <property type="entry name" value="DIADENYLATE CYCLASE"/>
    <property type="match status" value="1"/>
</dbReference>
<dbReference type="PANTHER" id="PTHR34185:SF1">
    <property type="entry name" value="DIADENYLATE CYCLASE"/>
    <property type="match status" value="1"/>
</dbReference>
<dbReference type="Pfam" id="PF02457">
    <property type="entry name" value="DAC"/>
    <property type="match status" value="1"/>
</dbReference>
<dbReference type="Pfam" id="PF19294">
    <property type="entry name" value="DACZ_N"/>
    <property type="match status" value="1"/>
</dbReference>
<dbReference type="PIRSF" id="PIRSF019073">
    <property type="entry name" value="UCP019073"/>
    <property type="match status" value="1"/>
</dbReference>
<dbReference type="SUPFAM" id="SSF143597">
    <property type="entry name" value="YojJ-like"/>
    <property type="match status" value="1"/>
</dbReference>
<dbReference type="PROSITE" id="PS51794">
    <property type="entry name" value="DAC"/>
    <property type="match status" value="1"/>
</dbReference>
<comment type="function">
    <text evidence="2">Diadenylate cyclase that catalyzes the condensation of 2 ATP molecules into cyclic di-AMP (c-di-AMP). c-di-AMP is a second messenger for intracellular signal transduction involved in the control of important regulatory processes such as osmoregulation. Is essential for H.volcanii. Overexpression of DacZ leads to cell death, suggesting the need for tight regulation of c-di-AMP levels. Cannot use GTP as substrate.</text>
</comment>
<comment type="catalytic activity">
    <reaction evidence="1 2">
        <text>2 ATP = 3',3'-c-di-AMP + 2 diphosphate</text>
        <dbReference type="Rhea" id="RHEA:35655"/>
        <dbReference type="ChEBI" id="CHEBI:30616"/>
        <dbReference type="ChEBI" id="CHEBI:33019"/>
        <dbReference type="ChEBI" id="CHEBI:71500"/>
        <dbReference type="EC" id="2.7.7.85"/>
    </reaction>
</comment>
<comment type="cofactor">
    <cofactor evidence="2">
        <name>Mn(2+)</name>
        <dbReference type="ChEBI" id="CHEBI:29035"/>
    </cofactor>
    <text evidence="2">Cannot use Mg(2+), Ca(2+), Ni(2+) or Co(2+) instead of Mn(2+) as cofactor.</text>
</comment>
<comment type="induction">
    <text evidence="2">Is constantly expressed at different growth phases in rich and selective media.</text>
</comment>
<comment type="disruption phenotype">
    <text evidence="2">It was not possible to obtain a strain in which the dacZ gene was deleted in standard growth conditions, indicating that dacZ is an essential gene.</text>
</comment>
<comment type="similarity">
    <text evidence="1">Belongs to the adenylate cyclase family. DacZ subfamily.</text>
</comment>
<evidence type="ECO:0000255" key="1">
    <source>
        <dbReference type="HAMAP-Rule" id="MF_00840"/>
    </source>
</evidence>
<evidence type="ECO:0000269" key="2">
    <source>
    </source>
</evidence>
<evidence type="ECO:0000303" key="3">
    <source>
    </source>
</evidence>
<evidence type="ECO:0000312" key="4">
    <source>
        <dbReference type="EMBL" id="ADE04317.1"/>
    </source>
</evidence>
<name>DACZ_HALVD</name>
<protein>
    <recommendedName>
        <fullName evidence="1 3">Diadenylate cyclase</fullName>
        <shortName evidence="1 3">DAC</shortName>
        <ecNumber evidence="1 2">2.7.7.85</ecNumber>
    </recommendedName>
    <alternativeName>
        <fullName evidence="1">Cyclic-di-AMP synthase</fullName>
        <shortName evidence="1">c-di-AMP synthase</shortName>
    </alternativeName>
</protein>
<organism>
    <name type="scientific">Haloferax volcanii (strain ATCC 29605 / DSM 3757 / JCM 8879 / NBRC 14742 / NCIMB 2012 / VKM B-1768 / DS2)</name>
    <name type="common">Halobacterium volcanii</name>
    <dbReference type="NCBI Taxonomy" id="309800"/>
    <lineage>
        <taxon>Archaea</taxon>
        <taxon>Methanobacteriati</taxon>
        <taxon>Methanobacteriota</taxon>
        <taxon>Stenosarchaea group</taxon>
        <taxon>Halobacteria</taxon>
        <taxon>Halobacteriales</taxon>
        <taxon>Haloferacaceae</taxon>
        <taxon>Haloferax</taxon>
    </lineage>
</organism>
<reference key="1">
    <citation type="journal article" date="2010" name="PLoS ONE">
        <title>The complete genome sequence of Haloferax volcanii DS2, a model archaeon.</title>
        <authorList>
            <person name="Hartman A.L."/>
            <person name="Norais C."/>
            <person name="Badger J.H."/>
            <person name="Delmas S."/>
            <person name="Haldenby S."/>
            <person name="Madupu R."/>
            <person name="Robinson J."/>
            <person name="Khouri H."/>
            <person name="Ren Q."/>
            <person name="Lowe T.M."/>
            <person name="Maupin-Furlow J."/>
            <person name="Pohlschroder M."/>
            <person name="Daniels C."/>
            <person name="Pfeiffer F."/>
            <person name="Allers T."/>
            <person name="Eisen J.A."/>
        </authorList>
    </citation>
    <scope>NUCLEOTIDE SEQUENCE [LARGE SCALE GENOMIC DNA]</scope>
    <source>
        <strain>ATCC 29605 / DSM 3757 / JCM 8879 / NBRC 14742 / NCIMB 2012 / VKM B-1768 / DS2</strain>
    </source>
</reference>
<reference key="2">
    <citation type="journal article" date="2019" name="MicrobiologyOpen">
        <title>Cyclic nucleotides in archaea: Cyclic di-AMP in the archaeon Haloferax volcanii and its putative role.</title>
        <authorList>
            <person name="Braun F."/>
            <person name="Thomalla L."/>
            <person name="van der Does C."/>
            <person name="Quax T.E.F."/>
            <person name="Allers T."/>
            <person name="Kaever V."/>
            <person name="Albers S.V."/>
        </authorList>
    </citation>
    <scope>FUNCTION</scope>
    <scope>CATALYTIC ACTIVITY</scope>
    <scope>COFACTOR</scope>
    <scope>SUBSTRATE SPECIFICITY</scope>
    <scope>INDUCTION</scope>
    <scope>DISRUPTION PHENOTYPE</scope>
    <scope>ROLE OF C-DI-AMP IN ARCHAEA</scope>
    <source>
        <strain>DS2 / DS70 / H26</strain>
    </source>
</reference>
<proteinExistence type="evidence at protein level"/>